<protein>
    <recommendedName>
        <fullName evidence="1">Peptide methionine sulfoxide reductase MsrB</fullName>
        <ecNumber evidence="1">1.8.4.12</ecNumber>
    </recommendedName>
    <alternativeName>
        <fullName evidence="1">Peptide-methionine (R)-S-oxide reductase</fullName>
    </alternativeName>
</protein>
<dbReference type="EC" id="1.8.4.12" evidence="1"/>
<dbReference type="EMBL" id="CP001635">
    <property type="protein sequence ID" value="ACS19556.1"/>
    <property type="molecule type" value="Genomic_DNA"/>
</dbReference>
<dbReference type="SMR" id="C5CNS9"/>
<dbReference type="STRING" id="543728.Vapar_2936"/>
<dbReference type="KEGG" id="vap:Vapar_2936"/>
<dbReference type="eggNOG" id="COG0229">
    <property type="taxonomic scope" value="Bacteria"/>
</dbReference>
<dbReference type="HOGENOM" id="CLU_031040_8_5_4"/>
<dbReference type="OrthoDB" id="9785497at2"/>
<dbReference type="GO" id="GO:0005737">
    <property type="term" value="C:cytoplasm"/>
    <property type="evidence" value="ECO:0007669"/>
    <property type="project" value="TreeGrafter"/>
</dbReference>
<dbReference type="GO" id="GO:0033743">
    <property type="term" value="F:peptide-methionine (R)-S-oxide reductase activity"/>
    <property type="evidence" value="ECO:0007669"/>
    <property type="project" value="UniProtKB-UniRule"/>
</dbReference>
<dbReference type="GO" id="GO:0008270">
    <property type="term" value="F:zinc ion binding"/>
    <property type="evidence" value="ECO:0007669"/>
    <property type="project" value="UniProtKB-UniRule"/>
</dbReference>
<dbReference type="GO" id="GO:0030091">
    <property type="term" value="P:protein repair"/>
    <property type="evidence" value="ECO:0007669"/>
    <property type="project" value="InterPro"/>
</dbReference>
<dbReference type="GO" id="GO:0006979">
    <property type="term" value="P:response to oxidative stress"/>
    <property type="evidence" value="ECO:0007669"/>
    <property type="project" value="InterPro"/>
</dbReference>
<dbReference type="FunFam" id="2.170.150.20:FF:000001">
    <property type="entry name" value="Peptide methionine sulfoxide reductase MsrB"/>
    <property type="match status" value="1"/>
</dbReference>
<dbReference type="Gene3D" id="2.170.150.20">
    <property type="entry name" value="Peptide methionine sulfoxide reductase"/>
    <property type="match status" value="1"/>
</dbReference>
<dbReference type="HAMAP" id="MF_01400">
    <property type="entry name" value="MsrB"/>
    <property type="match status" value="1"/>
</dbReference>
<dbReference type="InterPro" id="IPR028427">
    <property type="entry name" value="Met_Sox_Rdtase_MsrB"/>
</dbReference>
<dbReference type="InterPro" id="IPR002579">
    <property type="entry name" value="Met_Sox_Rdtase_MsrB_dom"/>
</dbReference>
<dbReference type="InterPro" id="IPR011057">
    <property type="entry name" value="Mss4-like_sf"/>
</dbReference>
<dbReference type="NCBIfam" id="TIGR00357">
    <property type="entry name" value="peptide-methionine (R)-S-oxide reductase MsrB"/>
    <property type="match status" value="1"/>
</dbReference>
<dbReference type="PANTHER" id="PTHR10173">
    <property type="entry name" value="METHIONINE SULFOXIDE REDUCTASE"/>
    <property type="match status" value="1"/>
</dbReference>
<dbReference type="PANTHER" id="PTHR10173:SF52">
    <property type="entry name" value="METHIONINE-R-SULFOXIDE REDUCTASE B1"/>
    <property type="match status" value="1"/>
</dbReference>
<dbReference type="Pfam" id="PF01641">
    <property type="entry name" value="SelR"/>
    <property type="match status" value="1"/>
</dbReference>
<dbReference type="SUPFAM" id="SSF51316">
    <property type="entry name" value="Mss4-like"/>
    <property type="match status" value="1"/>
</dbReference>
<dbReference type="PROSITE" id="PS51790">
    <property type="entry name" value="MSRB"/>
    <property type="match status" value="1"/>
</dbReference>
<comment type="catalytic activity">
    <reaction evidence="1">
        <text>L-methionyl-[protein] + [thioredoxin]-disulfide + H2O = L-methionyl-(R)-S-oxide-[protein] + [thioredoxin]-dithiol</text>
        <dbReference type="Rhea" id="RHEA:24164"/>
        <dbReference type="Rhea" id="RHEA-COMP:10698"/>
        <dbReference type="Rhea" id="RHEA-COMP:10700"/>
        <dbReference type="Rhea" id="RHEA-COMP:12313"/>
        <dbReference type="Rhea" id="RHEA-COMP:12314"/>
        <dbReference type="ChEBI" id="CHEBI:15377"/>
        <dbReference type="ChEBI" id="CHEBI:16044"/>
        <dbReference type="ChEBI" id="CHEBI:29950"/>
        <dbReference type="ChEBI" id="CHEBI:45764"/>
        <dbReference type="ChEBI" id="CHEBI:50058"/>
        <dbReference type="EC" id="1.8.4.12"/>
    </reaction>
</comment>
<comment type="cofactor">
    <cofactor evidence="1">
        <name>Zn(2+)</name>
        <dbReference type="ChEBI" id="CHEBI:29105"/>
    </cofactor>
    <text evidence="1">Binds 1 zinc ion per subunit. The zinc ion is important for the structural integrity of the protein.</text>
</comment>
<comment type="similarity">
    <text evidence="1">Belongs to the MsrB Met sulfoxide reductase family.</text>
</comment>
<name>MSRB_VARPS</name>
<reference key="1">
    <citation type="journal article" date="2011" name="J. Bacteriol.">
        <title>Complete genome sequence of the metabolically versatile plant growth-promoting endophyte, Variovorax paradoxus S110.</title>
        <authorList>
            <person name="Han J.I."/>
            <person name="Choi H.K."/>
            <person name="Lee S.W."/>
            <person name="Orwin P.M."/>
            <person name="Kim J."/>
            <person name="Laroe S.L."/>
            <person name="Kim T.G."/>
            <person name="O'Neil J."/>
            <person name="Leadbetter J.R."/>
            <person name="Lee S.Y."/>
            <person name="Hur C.G."/>
            <person name="Spain J.C."/>
            <person name="Ovchinnikova G."/>
            <person name="Goodwin L."/>
            <person name="Han C."/>
        </authorList>
    </citation>
    <scope>NUCLEOTIDE SEQUENCE [LARGE SCALE GENOMIC DNA]</scope>
    <source>
        <strain>S110</strain>
    </source>
</reference>
<gene>
    <name evidence="1" type="primary">msrB</name>
    <name type="ordered locus">Vapar_2936</name>
</gene>
<evidence type="ECO:0000255" key="1">
    <source>
        <dbReference type="HAMAP-Rule" id="MF_01400"/>
    </source>
</evidence>
<evidence type="ECO:0000255" key="2">
    <source>
        <dbReference type="PROSITE-ProRule" id="PRU01126"/>
    </source>
</evidence>
<proteinExistence type="inferred from homology"/>
<feature type="chain" id="PRO_1000215183" description="Peptide methionine sulfoxide reductase MsrB">
    <location>
        <begin position="1"/>
        <end position="136"/>
    </location>
</feature>
<feature type="domain" description="MsrB" evidence="2">
    <location>
        <begin position="9"/>
        <end position="136"/>
    </location>
</feature>
<feature type="active site" description="Nucleophile" evidence="2">
    <location>
        <position position="125"/>
    </location>
</feature>
<feature type="binding site" evidence="2">
    <location>
        <position position="53"/>
    </location>
    <ligand>
        <name>Zn(2+)</name>
        <dbReference type="ChEBI" id="CHEBI:29105"/>
    </ligand>
</feature>
<feature type="binding site" evidence="2">
    <location>
        <position position="56"/>
    </location>
    <ligand>
        <name>Zn(2+)</name>
        <dbReference type="ChEBI" id="CHEBI:29105"/>
    </ligand>
</feature>
<feature type="binding site" evidence="2">
    <location>
        <position position="102"/>
    </location>
    <ligand>
        <name>Zn(2+)</name>
        <dbReference type="ChEBI" id="CHEBI:29105"/>
    </ligand>
</feature>
<feature type="binding site" evidence="2">
    <location>
        <position position="105"/>
    </location>
    <ligand>
        <name>Zn(2+)</name>
        <dbReference type="ChEBI" id="CHEBI:29105"/>
    </ligand>
</feature>
<keyword id="KW-0479">Metal-binding</keyword>
<keyword id="KW-0560">Oxidoreductase</keyword>
<keyword id="KW-0862">Zinc</keyword>
<accession>C5CNS9</accession>
<sequence>MTTPIEKTDAEWKALLAEKGAEPAAFEVTRHAATERPFTGKYEAHWDDGTYHCICCGAKLFESSTKFDAGCGWPSFSQEAVPGAIRNIVDRSHGMVRTENVCANCGAHLGHVFPDGPTETGLRYCMNSASLDFKKK</sequence>
<organism>
    <name type="scientific">Variovorax paradoxus (strain S110)</name>
    <dbReference type="NCBI Taxonomy" id="543728"/>
    <lineage>
        <taxon>Bacteria</taxon>
        <taxon>Pseudomonadati</taxon>
        <taxon>Pseudomonadota</taxon>
        <taxon>Betaproteobacteria</taxon>
        <taxon>Burkholderiales</taxon>
        <taxon>Comamonadaceae</taxon>
        <taxon>Variovorax</taxon>
    </lineage>
</organism>